<gene>
    <name type="primary">TY5A</name>
    <name type="ordered locus">YCL074W</name>
    <name type="ORF">YCL74W</name>
</gene>
<accession>P25600</accession>
<feature type="chain" id="PRO_0000203503" description="Putative transposon Ty5-1 protein YCL074W">
    <location>
        <begin position="1"/>
        <end position="308"/>
    </location>
</feature>
<organism>
    <name type="scientific">Saccharomyces cerevisiae (strain ATCC 204508 / S288c)</name>
    <name type="common">Baker's yeast</name>
    <dbReference type="NCBI Taxonomy" id="559292"/>
    <lineage>
        <taxon>Eukaryota</taxon>
        <taxon>Fungi</taxon>
        <taxon>Dikarya</taxon>
        <taxon>Ascomycota</taxon>
        <taxon>Saccharomycotina</taxon>
        <taxon>Saccharomycetes</taxon>
        <taxon>Saccharomycetales</taxon>
        <taxon>Saccharomycetaceae</taxon>
        <taxon>Saccharomyces</taxon>
    </lineage>
</organism>
<reference key="1">
    <citation type="journal article" date="1992" name="Nature">
        <title>The complete DNA sequence of yeast chromosome III.</title>
        <authorList>
            <person name="Oliver S.G."/>
            <person name="van der Aart Q.J.M."/>
            <person name="Agostoni-Carbone M.L."/>
            <person name="Aigle M."/>
            <person name="Alberghina L."/>
            <person name="Alexandraki D."/>
            <person name="Antoine G."/>
            <person name="Anwar R."/>
            <person name="Ballesta J.P.G."/>
            <person name="Benit P."/>
            <person name="Berben G."/>
            <person name="Bergantino E."/>
            <person name="Biteau N."/>
            <person name="Bolle P.-A."/>
            <person name="Bolotin-Fukuhara M."/>
            <person name="Brown A."/>
            <person name="Brown A.J.P."/>
            <person name="Buhler J.-M."/>
            <person name="Carcano C."/>
            <person name="Carignani G."/>
            <person name="Cederberg H."/>
            <person name="Chanet R."/>
            <person name="Contreras R."/>
            <person name="Crouzet M."/>
            <person name="Daignan-Fornier B."/>
            <person name="Defoor E."/>
            <person name="Delgado M.D."/>
            <person name="Demolder J."/>
            <person name="Doira C."/>
            <person name="Dubois E."/>
            <person name="Dujon B."/>
            <person name="Duesterhoeft A."/>
            <person name="Erdmann D."/>
            <person name="Esteban M."/>
            <person name="Fabre F."/>
            <person name="Fairhead C."/>
            <person name="Faye G."/>
            <person name="Feldmann H."/>
            <person name="Fiers W."/>
            <person name="Francingues-Gaillard M.-C."/>
            <person name="Franco L."/>
            <person name="Frontali L."/>
            <person name="Fukuhara H."/>
            <person name="Fuller L.J."/>
            <person name="Galland P."/>
            <person name="Gent M.E."/>
            <person name="Gigot D."/>
            <person name="Gilliquet V."/>
            <person name="Glansdorff N."/>
            <person name="Goffeau A."/>
            <person name="Grenson M."/>
            <person name="Grisanti P."/>
            <person name="Grivell L.A."/>
            <person name="de Haan M."/>
            <person name="Haasemann M."/>
            <person name="Hatat D."/>
            <person name="Hoenicka J."/>
            <person name="Hegemann J.H."/>
            <person name="Herbert C.J."/>
            <person name="Hilger F."/>
            <person name="Hohmann S."/>
            <person name="Hollenberg C.P."/>
            <person name="Huse K."/>
            <person name="Iborra F."/>
            <person name="Indge K.J."/>
            <person name="Isono K."/>
            <person name="Jacq C."/>
            <person name="Jacquet M."/>
            <person name="James C.M."/>
            <person name="Jauniaux J.-C."/>
            <person name="Jia Y."/>
            <person name="Jimenez A."/>
            <person name="Kelly A."/>
            <person name="Kleinhans U."/>
            <person name="Kreisl P."/>
            <person name="Lanfranchi G."/>
            <person name="Lewis C."/>
            <person name="van der Linden C.G."/>
            <person name="Lucchini G."/>
            <person name="Lutzenkirchen K."/>
            <person name="Maat M.J."/>
            <person name="Mallet L."/>
            <person name="Mannhaupt G."/>
            <person name="Martegani E."/>
            <person name="Mathieu A."/>
            <person name="Maurer C.T.C."/>
            <person name="McConnell D."/>
            <person name="McKee R.A."/>
            <person name="Messenguy F."/>
            <person name="Mewes H.-W."/>
            <person name="Molemans F."/>
            <person name="Montague M.A."/>
            <person name="Muzi Falconi M."/>
            <person name="Navas L."/>
            <person name="Newlon C.S."/>
            <person name="Noone D."/>
            <person name="Pallier C."/>
            <person name="Panzeri L."/>
            <person name="Pearson B.M."/>
            <person name="Perea J."/>
            <person name="Philippsen P."/>
            <person name="Pierard A."/>
            <person name="Planta R.J."/>
            <person name="Plevani P."/>
            <person name="Poetsch B."/>
            <person name="Pohl F.M."/>
            <person name="Purnelle B."/>
            <person name="Ramezani Rad M."/>
            <person name="Rasmussen S.W."/>
            <person name="Raynal A."/>
            <person name="Remacha M.A."/>
            <person name="Richterich P."/>
            <person name="Roberts A.B."/>
            <person name="Rodriguez F."/>
            <person name="Sanz E."/>
            <person name="Schaaff-Gerstenschlaeger I."/>
            <person name="Scherens B."/>
            <person name="Schweitzer B."/>
            <person name="Shu Y."/>
            <person name="Skala J."/>
            <person name="Slonimski P.P."/>
            <person name="Sor F."/>
            <person name="Soustelle C."/>
            <person name="Spiegelberg R."/>
            <person name="Stateva L.I."/>
            <person name="Steensma H.Y."/>
            <person name="Steiner S."/>
            <person name="Thierry A."/>
            <person name="Thireos G."/>
            <person name="Tzermia M."/>
            <person name="Urrestarazu L.A."/>
            <person name="Valle G."/>
            <person name="Vetter I."/>
            <person name="van Vliet-Reedijk J.C."/>
            <person name="Voet M."/>
            <person name="Volckaert G."/>
            <person name="Vreken P."/>
            <person name="Wang H."/>
            <person name="Warmington J.R."/>
            <person name="von Wettstein D."/>
            <person name="Wicksteed B.L."/>
            <person name="Wilson C."/>
            <person name="Wurst H."/>
            <person name="Xu G."/>
            <person name="Yoshikawa A."/>
            <person name="Zimmermann F.K."/>
            <person name="Sgouros J.G."/>
        </authorList>
    </citation>
    <scope>NUCLEOTIDE SEQUENCE [LARGE SCALE GENOMIC DNA]</scope>
    <source>
        <strain>ATCC 204508 / S288c</strain>
    </source>
</reference>
<reference key="2">
    <citation type="journal article" date="2014" name="G3 (Bethesda)">
        <title>The reference genome sequence of Saccharomyces cerevisiae: Then and now.</title>
        <authorList>
            <person name="Engel S.R."/>
            <person name="Dietrich F.S."/>
            <person name="Fisk D.G."/>
            <person name="Binkley G."/>
            <person name="Balakrishnan R."/>
            <person name="Costanzo M.C."/>
            <person name="Dwight S.S."/>
            <person name="Hitz B.C."/>
            <person name="Karra K."/>
            <person name="Nash R.S."/>
            <person name="Weng S."/>
            <person name="Wong E.D."/>
            <person name="Lloyd P."/>
            <person name="Skrzypek M.S."/>
            <person name="Miyasato S.R."/>
            <person name="Simison M."/>
            <person name="Cherry J.M."/>
        </authorList>
    </citation>
    <scope>GENOME REANNOTATION</scope>
    <source>
        <strain>ATCC 204508 / S288c</strain>
    </source>
</reference>
<reference key="3">
    <citation type="submission" date="2001-06" db="EMBL/GenBank/DDBJ databases">
        <authorList>
            <person name="Valles G."/>
            <person name="Volckaerts G."/>
        </authorList>
    </citation>
    <scope>SEQUENCE REVISION TO 85; 132 AND 246</scope>
</reference>
<reference key="4">
    <citation type="journal article" date="1992" name="Nature">
        <title>Yeast retrotransposon revealed.</title>
        <authorList>
            <person name="Voytas D.F."/>
            <person name="Boeke J.D."/>
        </authorList>
    </citation>
    <scope>IDENTIFICATION AS PART OF TRANSPOSON TY5-1</scope>
</reference>
<dbReference type="EMBL" id="X59720">
    <property type="status" value="NOT_ANNOTATED_CDS"/>
    <property type="molecule type" value="Genomic_DNA"/>
</dbReference>
<dbReference type="PIR" id="S19406">
    <property type="entry name" value="S19406"/>
</dbReference>
<dbReference type="DIP" id="DIP-7287N"/>
<dbReference type="AGR" id="SGD:S000000579"/>
<dbReference type="SGD" id="S000000579">
    <property type="gene designation" value="YCL074W"/>
</dbReference>
<dbReference type="GO" id="GO:0043231">
    <property type="term" value="C:intracellular membrane-bounded organelle"/>
    <property type="evidence" value="ECO:0007669"/>
    <property type="project" value="UniProtKB-ARBA"/>
</dbReference>
<dbReference type="CDD" id="cd09272">
    <property type="entry name" value="RNase_HI_RT_Ty1"/>
    <property type="match status" value="1"/>
</dbReference>
<dbReference type="InterPro" id="IPR043502">
    <property type="entry name" value="DNA/RNA_pol_sf"/>
</dbReference>
<dbReference type="InterPro" id="IPR013103">
    <property type="entry name" value="RVT_2"/>
</dbReference>
<dbReference type="PANTHER" id="PTHR11439">
    <property type="entry name" value="GAG-POL-RELATED RETROTRANSPOSON"/>
    <property type="match status" value="1"/>
</dbReference>
<dbReference type="PANTHER" id="PTHR11439:SF483">
    <property type="entry name" value="PEPTIDE SYNTHASE GLIP-LIKE, PUTATIVE (AFU_ORTHOLOGUE AFUA_3G12920)-RELATED"/>
    <property type="match status" value="1"/>
</dbReference>
<dbReference type="Pfam" id="PF07727">
    <property type="entry name" value="RVT_2"/>
    <property type="match status" value="1"/>
</dbReference>
<dbReference type="SUPFAM" id="SSF56672">
    <property type="entry name" value="DNA/RNA polymerases"/>
    <property type="match status" value="1"/>
</dbReference>
<keyword id="KW-0814">Transposable element</keyword>
<name>YCH4_YEAST</name>
<protein>
    <recommendedName>
        <fullName>Putative transposon Ty5-1 protein YCL074W</fullName>
    </recommendedName>
</protein>
<sequence>MDVDTAFLNSTMDEPIYVKQPPGFVNERNPDYVWELYGGMYGLKQAPLLWNEHINNTLKKIGFCRHEGEHGLYFRSTSDGPIYIAVYVDDLLVAAPSPKIYDRVKQELTKLYSMKDLGKVDKFLGLNIHQSSNGDITLSLQDYIAKAASESEINTFKLTQTPLCNSKPLFETTSPHLKDITPYQSIVGQLLFCANTGRPDISYPVSLLSRFLREPRAIHLESARRVLRYLYTTRSMCLKYRSGSQLALTVYCDASHGAIHDLPHSTGGYVTLLAGAPVTWSSKKLKGVIPVPSTEAEYITASETVMEI</sequence>
<proteinExistence type="uncertain"/>
<evidence type="ECO:0000305" key="1">
    <source>
    </source>
</evidence>
<evidence type="ECO:0000305" key="2">
    <source>
    </source>
</evidence>
<comment type="caution">
    <text evidence="1 2">Could be the product of a pseudogene unlikely to encode a functional protein. This is a truncated part of a POL protein in the mutated, non-functional YCLWTy5-1 transposon. Because of that it is not part of the S.cerevisiae S288c complete/reference proteome set.</text>
</comment>